<organism>
    <name type="scientific">Brucella anthropi (strain ATCC 49188 / DSM 6882 / CCUG 24695 / JCM 21032 / LMG 3331 / NBRC 15819 / NCTC 12168 / Alc 37)</name>
    <name type="common">Ochrobactrum anthropi</name>
    <dbReference type="NCBI Taxonomy" id="439375"/>
    <lineage>
        <taxon>Bacteria</taxon>
        <taxon>Pseudomonadati</taxon>
        <taxon>Pseudomonadota</taxon>
        <taxon>Alphaproteobacteria</taxon>
        <taxon>Hyphomicrobiales</taxon>
        <taxon>Brucellaceae</taxon>
        <taxon>Brucella/Ochrobactrum group</taxon>
        <taxon>Brucella</taxon>
    </lineage>
</organism>
<sequence>MATANSSVKIGNVTFSNSAPFALIAGPCQMETREHAFDMAGRLKEMTDKLGIDLVYKSSFDKANRTSLKAERGIGLEKAMEVFADLKKEFGFPVLTDIHTEEQCAAVAPVVDVLQIPAFLCRQTDLLIAAAKTGRVVNVKKGQFLAPWDMKNVLSKITESGNPNVLATERGVSFGYNTLVSDMRSLPIMAGLGSPVVFDATHSVQQPGGHGGSSGGQREFVETLARAAVAVGVAGLFIETHQDPDNAPSDGPNMVPVDKMPALLEKLMAFDRIAKGL</sequence>
<dbReference type="EC" id="2.5.1.55" evidence="1"/>
<dbReference type="EMBL" id="CP000758">
    <property type="protein sequence ID" value="ABS14771.1"/>
    <property type="molecule type" value="Genomic_DNA"/>
</dbReference>
<dbReference type="RefSeq" id="WP_012091968.1">
    <property type="nucleotide sequence ID" value="NC_009667.1"/>
</dbReference>
<dbReference type="SMR" id="A6X0L7"/>
<dbReference type="STRING" id="439375.Oant_2055"/>
<dbReference type="KEGG" id="oan:Oant_2055"/>
<dbReference type="PATRIC" id="fig|439375.7.peg.2161"/>
<dbReference type="eggNOG" id="COG2877">
    <property type="taxonomic scope" value="Bacteria"/>
</dbReference>
<dbReference type="HOGENOM" id="CLU_036666_0_0_5"/>
<dbReference type="PhylomeDB" id="A6X0L7"/>
<dbReference type="UniPathway" id="UPA00030"/>
<dbReference type="UniPathway" id="UPA00357">
    <property type="reaction ID" value="UER00474"/>
</dbReference>
<dbReference type="Proteomes" id="UP000002301">
    <property type="component" value="Chromosome 1"/>
</dbReference>
<dbReference type="GO" id="GO:0005737">
    <property type="term" value="C:cytoplasm"/>
    <property type="evidence" value="ECO:0007669"/>
    <property type="project" value="UniProtKB-SubCell"/>
</dbReference>
<dbReference type="GO" id="GO:0008676">
    <property type="term" value="F:3-deoxy-8-phosphooctulonate synthase activity"/>
    <property type="evidence" value="ECO:0007669"/>
    <property type="project" value="UniProtKB-UniRule"/>
</dbReference>
<dbReference type="GO" id="GO:0019294">
    <property type="term" value="P:keto-3-deoxy-D-manno-octulosonic acid biosynthetic process"/>
    <property type="evidence" value="ECO:0007669"/>
    <property type="project" value="UniProtKB-UniRule"/>
</dbReference>
<dbReference type="Gene3D" id="3.20.20.70">
    <property type="entry name" value="Aldolase class I"/>
    <property type="match status" value="1"/>
</dbReference>
<dbReference type="HAMAP" id="MF_00056">
    <property type="entry name" value="KDO8P_synth"/>
    <property type="match status" value="1"/>
</dbReference>
<dbReference type="InterPro" id="IPR013785">
    <property type="entry name" value="Aldolase_TIM"/>
</dbReference>
<dbReference type="InterPro" id="IPR006218">
    <property type="entry name" value="DAHP1/KDSA"/>
</dbReference>
<dbReference type="InterPro" id="IPR006269">
    <property type="entry name" value="KDO8P_synthase"/>
</dbReference>
<dbReference type="NCBIfam" id="TIGR01362">
    <property type="entry name" value="KDO8P_synth"/>
    <property type="match status" value="1"/>
</dbReference>
<dbReference type="NCBIfam" id="NF003543">
    <property type="entry name" value="PRK05198.1"/>
    <property type="match status" value="1"/>
</dbReference>
<dbReference type="PANTHER" id="PTHR21057">
    <property type="entry name" value="PHOSPHO-2-DEHYDRO-3-DEOXYHEPTONATE ALDOLASE"/>
    <property type="match status" value="1"/>
</dbReference>
<dbReference type="Pfam" id="PF00793">
    <property type="entry name" value="DAHP_synth_1"/>
    <property type="match status" value="1"/>
</dbReference>
<dbReference type="SUPFAM" id="SSF51569">
    <property type="entry name" value="Aldolase"/>
    <property type="match status" value="1"/>
</dbReference>
<protein>
    <recommendedName>
        <fullName evidence="1">2-dehydro-3-deoxyphosphooctonate aldolase</fullName>
        <ecNumber evidence="1">2.5.1.55</ecNumber>
    </recommendedName>
    <alternativeName>
        <fullName evidence="1">3-deoxy-D-manno-octulosonic acid 8-phosphate synthase</fullName>
    </alternativeName>
    <alternativeName>
        <fullName evidence="1">KDO-8-phosphate synthase</fullName>
        <shortName evidence="1">KDO 8-P synthase</shortName>
        <shortName evidence="1">KDOPS</shortName>
    </alternativeName>
    <alternativeName>
        <fullName evidence="1">Phospho-2-dehydro-3-deoxyoctonate aldolase</fullName>
    </alternativeName>
</protein>
<keyword id="KW-0963">Cytoplasm</keyword>
<keyword id="KW-0448">Lipopolysaccharide biosynthesis</keyword>
<keyword id="KW-1185">Reference proteome</keyword>
<keyword id="KW-0808">Transferase</keyword>
<name>KDSA_BRUA4</name>
<proteinExistence type="inferred from homology"/>
<evidence type="ECO:0000255" key="1">
    <source>
        <dbReference type="HAMAP-Rule" id="MF_00056"/>
    </source>
</evidence>
<comment type="catalytic activity">
    <reaction evidence="1">
        <text>D-arabinose 5-phosphate + phosphoenolpyruvate + H2O = 3-deoxy-alpha-D-manno-2-octulosonate-8-phosphate + phosphate</text>
        <dbReference type="Rhea" id="RHEA:14053"/>
        <dbReference type="ChEBI" id="CHEBI:15377"/>
        <dbReference type="ChEBI" id="CHEBI:43474"/>
        <dbReference type="ChEBI" id="CHEBI:57693"/>
        <dbReference type="ChEBI" id="CHEBI:58702"/>
        <dbReference type="ChEBI" id="CHEBI:85985"/>
        <dbReference type="EC" id="2.5.1.55"/>
    </reaction>
</comment>
<comment type="pathway">
    <text evidence="1">Carbohydrate biosynthesis; 3-deoxy-D-manno-octulosonate biosynthesis; 3-deoxy-D-manno-octulosonate from D-ribulose 5-phosphate: step 2/3.</text>
</comment>
<comment type="pathway">
    <text evidence="1">Bacterial outer membrane biogenesis; lipopolysaccharide biosynthesis.</text>
</comment>
<comment type="subcellular location">
    <subcellularLocation>
        <location evidence="1">Cytoplasm</location>
    </subcellularLocation>
</comment>
<comment type="similarity">
    <text evidence="1">Belongs to the KdsA family.</text>
</comment>
<accession>A6X0L7</accession>
<feature type="chain" id="PRO_1000003342" description="2-dehydro-3-deoxyphosphooctonate aldolase">
    <location>
        <begin position="1"/>
        <end position="277"/>
    </location>
</feature>
<gene>
    <name evidence="1" type="primary">kdsA</name>
    <name type="ordered locus">Oant_2055</name>
</gene>
<reference key="1">
    <citation type="journal article" date="2011" name="J. Bacteriol.">
        <title>Genome of Ochrobactrum anthropi ATCC 49188 T, a versatile opportunistic pathogen and symbiont of several eukaryotic hosts.</title>
        <authorList>
            <person name="Chain P.S."/>
            <person name="Lang D.M."/>
            <person name="Comerci D.J."/>
            <person name="Malfatti S.A."/>
            <person name="Vergez L.M."/>
            <person name="Shin M."/>
            <person name="Ugalde R.A."/>
            <person name="Garcia E."/>
            <person name="Tolmasky M.E."/>
        </authorList>
    </citation>
    <scope>NUCLEOTIDE SEQUENCE [LARGE SCALE GENOMIC DNA]</scope>
    <source>
        <strain>ATCC 49188 / DSM 6882 / CCUG 24695 / JCM 21032 / LMG 3331 / NBRC 15819 / NCTC 12168 / Alc 37</strain>
    </source>
</reference>